<dbReference type="EMBL" id="CP000116">
    <property type="protein sequence ID" value="AAZ98058.1"/>
    <property type="molecule type" value="Genomic_DNA"/>
</dbReference>
<dbReference type="RefSeq" id="WP_011312617.1">
    <property type="nucleotide sequence ID" value="NC_007404.1"/>
</dbReference>
<dbReference type="SMR" id="Q3SH31"/>
<dbReference type="STRING" id="292415.Tbd_2105"/>
<dbReference type="KEGG" id="tbd:Tbd_2105"/>
<dbReference type="eggNOG" id="COG0360">
    <property type="taxonomic scope" value="Bacteria"/>
</dbReference>
<dbReference type="HOGENOM" id="CLU_113441_6_1_4"/>
<dbReference type="OrthoDB" id="9812702at2"/>
<dbReference type="Proteomes" id="UP000008291">
    <property type="component" value="Chromosome"/>
</dbReference>
<dbReference type="GO" id="GO:0022627">
    <property type="term" value="C:cytosolic small ribosomal subunit"/>
    <property type="evidence" value="ECO:0007669"/>
    <property type="project" value="TreeGrafter"/>
</dbReference>
<dbReference type="GO" id="GO:0070181">
    <property type="term" value="F:small ribosomal subunit rRNA binding"/>
    <property type="evidence" value="ECO:0007669"/>
    <property type="project" value="TreeGrafter"/>
</dbReference>
<dbReference type="GO" id="GO:0003735">
    <property type="term" value="F:structural constituent of ribosome"/>
    <property type="evidence" value="ECO:0007669"/>
    <property type="project" value="InterPro"/>
</dbReference>
<dbReference type="GO" id="GO:0006412">
    <property type="term" value="P:translation"/>
    <property type="evidence" value="ECO:0007669"/>
    <property type="project" value="UniProtKB-UniRule"/>
</dbReference>
<dbReference type="CDD" id="cd00473">
    <property type="entry name" value="bS6"/>
    <property type="match status" value="1"/>
</dbReference>
<dbReference type="Gene3D" id="3.30.70.60">
    <property type="match status" value="1"/>
</dbReference>
<dbReference type="HAMAP" id="MF_00360">
    <property type="entry name" value="Ribosomal_bS6"/>
    <property type="match status" value="1"/>
</dbReference>
<dbReference type="InterPro" id="IPR000529">
    <property type="entry name" value="Ribosomal_bS6"/>
</dbReference>
<dbReference type="InterPro" id="IPR035980">
    <property type="entry name" value="Ribosomal_bS6_sf"/>
</dbReference>
<dbReference type="InterPro" id="IPR020814">
    <property type="entry name" value="Ribosomal_S6_plastid/chlpt"/>
</dbReference>
<dbReference type="InterPro" id="IPR014717">
    <property type="entry name" value="Transl_elong_EF1B/ribsomal_bS6"/>
</dbReference>
<dbReference type="NCBIfam" id="TIGR00166">
    <property type="entry name" value="S6"/>
    <property type="match status" value="1"/>
</dbReference>
<dbReference type="PANTHER" id="PTHR21011">
    <property type="entry name" value="MITOCHONDRIAL 28S RIBOSOMAL PROTEIN S6"/>
    <property type="match status" value="1"/>
</dbReference>
<dbReference type="PANTHER" id="PTHR21011:SF1">
    <property type="entry name" value="SMALL RIBOSOMAL SUBUNIT PROTEIN BS6M"/>
    <property type="match status" value="1"/>
</dbReference>
<dbReference type="Pfam" id="PF01250">
    <property type="entry name" value="Ribosomal_S6"/>
    <property type="match status" value="1"/>
</dbReference>
<dbReference type="SUPFAM" id="SSF54995">
    <property type="entry name" value="Ribosomal protein S6"/>
    <property type="match status" value="1"/>
</dbReference>
<comment type="function">
    <text evidence="1">Binds together with bS18 to 16S ribosomal RNA.</text>
</comment>
<comment type="similarity">
    <text evidence="1">Belongs to the bacterial ribosomal protein bS6 family.</text>
</comment>
<feature type="chain" id="PRO_0000229586" description="Small ribosomal subunit protein bS6">
    <location>
        <begin position="1"/>
        <end position="127"/>
    </location>
</feature>
<feature type="region of interest" description="Disordered" evidence="2">
    <location>
        <begin position="101"/>
        <end position="127"/>
    </location>
</feature>
<feature type="compositionally biased region" description="Low complexity" evidence="2">
    <location>
        <begin position="115"/>
        <end position="127"/>
    </location>
</feature>
<sequence length="127" mass="14503">MRHYEIVFIVHPDQSEQVPAMIERYRANIAARGGNVHRLEDWGRRQMAYPIQKVHKAHYVLMNIECDQETLEELEHGFKFNDAVLRHLTIKRDAAVTAASPMMKEEKARDLLQGAKADAPAEQPAAA</sequence>
<accession>Q3SH31</accession>
<proteinExistence type="inferred from homology"/>
<reference key="1">
    <citation type="journal article" date="2006" name="J. Bacteriol.">
        <title>The genome sequence of the obligately chemolithoautotrophic, facultatively anaerobic bacterium Thiobacillus denitrificans.</title>
        <authorList>
            <person name="Beller H.R."/>
            <person name="Chain P.S."/>
            <person name="Letain T.E."/>
            <person name="Chakicherla A."/>
            <person name="Larimer F.W."/>
            <person name="Richardson P.M."/>
            <person name="Coleman M.A."/>
            <person name="Wood A.P."/>
            <person name="Kelly D.P."/>
        </authorList>
    </citation>
    <scope>NUCLEOTIDE SEQUENCE [LARGE SCALE GENOMIC DNA]</scope>
    <source>
        <strain>ATCC 25259 / T1</strain>
    </source>
</reference>
<evidence type="ECO:0000255" key="1">
    <source>
        <dbReference type="HAMAP-Rule" id="MF_00360"/>
    </source>
</evidence>
<evidence type="ECO:0000256" key="2">
    <source>
        <dbReference type="SAM" id="MobiDB-lite"/>
    </source>
</evidence>
<evidence type="ECO:0000305" key="3"/>
<protein>
    <recommendedName>
        <fullName evidence="1">Small ribosomal subunit protein bS6</fullName>
    </recommendedName>
    <alternativeName>
        <fullName evidence="3">30S ribosomal protein S6</fullName>
    </alternativeName>
</protein>
<gene>
    <name evidence="1" type="primary">rpsF</name>
    <name type="ordered locus">Tbd_2105</name>
</gene>
<organism>
    <name type="scientific">Thiobacillus denitrificans (strain ATCC 25259 / T1)</name>
    <dbReference type="NCBI Taxonomy" id="292415"/>
    <lineage>
        <taxon>Bacteria</taxon>
        <taxon>Pseudomonadati</taxon>
        <taxon>Pseudomonadota</taxon>
        <taxon>Betaproteobacteria</taxon>
        <taxon>Nitrosomonadales</taxon>
        <taxon>Thiobacillaceae</taxon>
        <taxon>Thiobacillus</taxon>
    </lineage>
</organism>
<keyword id="KW-1185">Reference proteome</keyword>
<keyword id="KW-0687">Ribonucleoprotein</keyword>
<keyword id="KW-0689">Ribosomal protein</keyword>
<keyword id="KW-0694">RNA-binding</keyword>
<keyword id="KW-0699">rRNA-binding</keyword>
<name>RS6_THIDA</name>